<gene>
    <name evidence="1" type="primary">trpD</name>
    <name type="ordered locus">aq_196</name>
</gene>
<protein>
    <recommendedName>
        <fullName evidence="1">Anthranilate phosphoribosyltransferase</fullName>
        <ecNumber evidence="1">2.4.2.18</ecNumber>
    </recommendedName>
</protein>
<organism>
    <name type="scientific">Aquifex aeolicus (strain VF5)</name>
    <dbReference type="NCBI Taxonomy" id="224324"/>
    <lineage>
        <taxon>Bacteria</taxon>
        <taxon>Pseudomonadati</taxon>
        <taxon>Aquificota</taxon>
        <taxon>Aquificia</taxon>
        <taxon>Aquificales</taxon>
        <taxon>Aquificaceae</taxon>
        <taxon>Aquifex</taxon>
    </lineage>
</organism>
<proteinExistence type="inferred from homology"/>
<keyword id="KW-0028">Amino-acid biosynthesis</keyword>
<keyword id="KW-0057">Aromatic amino acid biosynthesis</keyword>
<keyword id="KW-0328">Glycosyltransferase</keyword>
<keyword id="KW-0460">Magnesium</keyword>
<keyword id="KW-0479">Metal-binding</keyword>
<keyword id="KW-1185">Reference proteome</keyword>
<keyword id="KW-0808">Transferase</keyword>
<keyword id="KW-0822">Tryptophan biosynthesis</keyword>
<comment type="function">
    <text evidence="1">Catalyzes the transfer of the phosphoribosyl group of 5-phosphorylribose-1-pyrophosphate (PRPP) to anthranilate to yield N-(5'-phosphoribosyl)-anthranilate (PRA).</text>
</comment>
<comment type="catalytic activity">
    <reaction evidence="1">
        <text>N-(5-phospho-beta-D-ribosyl)anthranilate + diphosphate = 5-phospho-alpha-D-ribose 1-diphosphate + anthranilate</text>
        <dbReference type="Rhea" id="RHEA:11768"/>
        <dbReference type="ChEBI" id="CHEBI:16567"/>
        <dbReference type="ChEBI" id="CHEBI:18277"/>
        <dbReference type="ChEBI" id="CHEBI:33019"/>
        <dbReference type="ChEBI" id="CHEBI:58017"/>
        <dbReference type="EC" id="2.4.2.18"/>
    </reaction>
</comment>
<comment type="cofactor">
    <cofactor evidence="1">
        <name>Mg(2+)</name>
        <dbReference type="ChEBI" id="CHEBI:18420"/>
    </cofactor>
    <text evidence="1">Binds 2 magnesium ions per monomer.</text>
</comment>
<comment type="pathway">
    <text evidence="1">Amino-acid biosynthesis; L-tryptophan biosynthesis; L-tryptophan from chorismate: step 2/5.</text>
</comment>
<comment type="subunit">
    <text evidence="1">Homodimer.</text>
</comment>
<comment type="similarity">
    <text evidence="1">Belongs to the anthranilate phosphoribosyltransferase family.</text>
</comment>
<sequence>MELVRELLRKIAEFENLTAEEMYNLMKEVAEGRATDAQIGALVMGTKMKGETPEEIEGAVKLFREKVVRVPVKDPEELVDVVGTGGDKSSTFNVSTVTGFVLAGAGVKVAKHGNRSVSSKSGSADFLEALGAKVELLPEKVARLIEEVGFGFMFAPLFHPAMKRVVSPRREVGVRSIFNLIGPLTNPAGVKRYLLGVFSKEYVDKFAKALKNLGVKKAFVVHGEGGIDEVSVEGETYVTEVSEEGIRSFTFSPEELGVKRKSLSEVRVNSPEESVKVALSVLRGEEGTPRDMVLLNASFGILVSERAGDIKEAFEMAKESIDSGKALEVLEKYVELSNKI</sequence>
<reference key="1">
    <citation type="journal article" date="1998" name="Nature">
        <title>The complete genome of the hyperthermophilic bacterium Aquifex aeolicus.</title>
        <authorList>
            <person name="Deckert G."/>
            <person name="Warren P.V."/>
            <person name="Gaasterland T."/>
            <person name="Young W.G."/>
            <person name="Lenox A.L."/>
            <person name="Graham D.E."/>
            <person name="Overbeek R."/>
            <person name="Snead M.A."/>
            <person name="Keller M."/>
            <person name="Aujay M."/>
            <person name="Huber R."/>
            <person name="Feldman R.A."/>
            <person name="Short J.M."/>
            <person name="Olsen G.J."/>
            <person name="Swanson R.V."/>
        </authorList>
    </citation>
    <scope>NUCLEOTIDE SEQUENCE [LARGE SCALE GENOMIC DNA]</scope>
    <source>
        <strain>VF5</strain>
    </source>
</reference>
<name>TRPD_AQUAE</name>
<evidence type="ECO:0000255" key="1">
    <source>
        <dbReference type="HAMAP-Rule" id="MF_00211"/>
    </source>
</evidence>
<accession>O66576</accession>
<feature type="chain" id="PRO_0000154421" description="Anthranilate phosphoribosyltransferase">
    <location>
        <begin position="1"/>
        <end position="340"/>
    </location>
</feature>
<feature type="binding site" evidence="1">
    <location>
        <position position="83"/>
    </location>
    <ligand>
        <name>5-phospho-alpha-D-ribose 1-diphosphate</name>
        <dbReference type="ChEBI" id="CHEBI:58017"/>
    </ligand>
</feature>
<feature type="binding site" evidence="1">
    <location>
        <position position="83"/>
    </location>
    <ligand>
        <name>anthranilate</name>
        <dbReference type="ChEBI" id="CHEBI:16567"/>
        <label>1</label>
    </ligand>
</feature>
<feature type="binding site" evidence="1">
    <location>
        <begin position="86"/>
        <end position="87"/>
    </location>
    <ligand>
        <name>5-phospho-alpha-D-ribose 1-diphosphate</name>
        <dbReference type="ChEBI" id="CHEBI:58017"/>
    </ligand>
</feature>
<feature type="binding site" evidence="1">
    <location>
        <position position="91"/>
    </location>
    <ligand>
        <name>5-phospho-alpha-D-ribose 1-diphosphate</name>
        <dbReference type="ChEBI" id="CHEBI:58017"/>
    </ligand>
</feature>
<feature type="binding site" evidence="1">
    <location>
        <begin position="93"/>
        <end position="96"/>
    </location>
    <ligand>
        <name>5-phospho-alpha-D-ribose 1-diphosphate</name>
        <dbReference type="ChEBI" id="CHEBI:58017"/>
    </ligand>
</feature>
<feature type="binding site" evidence="1">
    <location>
        <position position="95"/>
    </location>
    <ligand>
        <name>Mg(2+)</name>
        <dbReference type="ChEBI" id="CHEBI:18420"/>
        <label>1</label>
    </ligand>
</feature>
<feature type="binding site" evidence="1">
    <location>
        <begin position="111"/>
        <end position="119"/>
    </location>
    <ligand>
        <name>5-phospho-alpha-D-ribose 1-diphosphate</name>
        <dbReference type="ChEBI" id="CHEBI:58017"/>
    </ligand>
</feature>
<feature type="binding site" evidence="1">
    <location>
        <position position="114"/>
    </location>
    <ligand>
        <name>anthranilate</name>
        <dbReference type="ChEBI" id="CHEBI:16567"/>
        <label>1</label>
    </ligand>
</feature>
<feature type="binding site" evidence="1">
    <location>
        <position position="123"/>
    </location>
    <ligand>
        <name>5-phospho-alpha-D-ribose 1-diphosphate</name>
        <dbReference type="ChEBI" id="CHEBI:58017"/>
    </ligand>
</feature>
<feature type="binding site" evidence="1">
    <location>
        <position position="169"/>
    </location>
    <ligand>
        <name>anthranilate</name>
        <dbReference type="ChEBI" id="CHEBI:16567"/>
        <label>2</label>
    </ligand>
</feature>
<feature type="binding site" evidence="1">
    <location>
        <position position="228"/>
    </location>
    <ligand>
        <name>Mg(2+)</name>
        <dbReference type="ChEBI" id="CHEBI:18420"/>
        <label>2</label>
    </ligand>
</feature>
<feature type="binding site" evidence="1">
    <location>
        <position position="229"/>
    </location>
    <ligand>
        <name>Mg(2+)</name>
        <dbReference type="ChEBI" id="CHEBI:18420"/>
        <label>1</label>
    </ligand>
</feature>
<feature type="binding site" evidence="1">
    <location>
        <position position="229"/>
    </location>
    <ligand>
        <name>Mg(2+)</name>
        <dbReference type="ChEBI" id="CHEBI:18420"/>
        <label>2</label>
    </ligand>
</feature>
<dbReference type="EC" id="2.4.2.18" evidence="1"/>
<dbReference type="EMBL" id="AE000657">
    <property type="protein sequence ID" value="AAC06519.1"/>
    <property type="molecule type" value="Genomic_DNA"/>
</dbReference>
<dbReference type="PIR" id="D70318">
    <property type="entry name" value="D70318"/>
</dbReference>
<dbReference type="RefSeq" id="NP_213136.1">
    <property type="nucleotide sequence ID" value="NC_000918.1"/>
</dbReference>
<dbReference type="RefSeq" id="WP_010880074.1">
    <property type="nucleotide sequence ID" value="NC_000918.1"/>
</dbReference>
<dbReference type="SMR" id="O66576"/>
<dbReference type="FunCoup" id="O66576">
    <property type="interactions" value="355"/>
</dbReference>
<dbReference type="STRING" id="224324.aq_196"/>
<dbReference type="EnsemblBacteria" id="AAC06519">
    <property type="protein sequence ID" value="AAC06519"/>
    <property type="gene ID" value="aq_196"/>
</dbReference>
<dbReference type="KEGG" id="aae:aq_196"/>
<dbReference type="PATRIC" id="fig|224324.8.peg.167"/>
<dbReference type="eggNOG" id="COG0547">
    <property type="taxonomic scope" value="Bacteria"/>
</dbReference>
<dbReference type="HOGENOM" id="CLU_034315_2_1_0"/>
<dbReference type="InParanoid" id="O66576"/>
<dbReference type="OrthoDB" id="9806430at2"/>
<dbReference type="UniPathway" id="UPA00035">
    <property type="reaction ID" value="UER00041"/>
</dbReference>
<dbReference type="Proteomes" id="UP000000798">
    <property type="component" value="Chromosome"/>
</dbReference>
<dbReference type="GO" id="GO:0005829">
    <property type="term" value="C:cytosol"/>
    <property type="evidence" value="ECO:0000318"/>
    <property type="project" value="GO_Central"/>
</dbReference>
<dbReference type="GO" id="GO:0004048">
    <property type="term" value="F:anthranilate phosphoribosyltransferase activity"/>
    <property type="evidence" value="ECO:0007669"/>
    <property type="project" value="UniProtKB-UniRule"/>
</dbReference>
<dbReference type="GO" id="GO:0000287">
    <property type="term" value="F:magnesium ion binding"/>
    <property type="evidence" value="ECO:0007669"/>
    <property type="project" value="UniProtKB-UniRule"/>
</dbReference>
<dbReference type="GO" id="GO:0000162">
    <property type="term" value="P:L-tryptophan biosynthetic process"/>
    <property type="evidence" value="ECO:0000318"/>
    <property type="project" value="GO_Central"/>
</dbReference>
<dbReference type="FunFam" id="3.40.1030.10:FF:000002">
    <property type="entry name" value="Anthranilate phosphoribosyltransferase"/>
    <property type="match status" value="1"/>
</dbReference>
<dbReference type="Gene3D" id="3.40.1030.10">
    <property type="entry name" value="Nucleoside phosphorylase/phosphoribosyltransferase catalytic domain"/>
    <property type="match status" value="1"/>
</dbReference>
<dbReference type="Gene3D" id="1.20.970.10">
    <property type="entry name" value="Transferase, Pyrimidine Nucleoside Phosphorylase, Chain C"/>
    <property type="match status" value="1"/>
</dbReference>
<dbReference type="HAMAP" id="MF_00211">
    <property type="entry name" value="TrpD"/>
    <property type="match status" value="1"/>
</dbReference>
<dbReference type="InterPro" id="IPR005940">
    <property type="entry name" value="Anthranilate_Pribosyl_Tfrase"/>
</dbReference>
<dbReference type="InterPro" id="IPR000312">
    <property type="entry name" value="Glycosyl_Trfase_fam3"/>
</dbReference>
<dbReference type="InterPro" id="IPR017459">
    <property type="entry name" value="Glycosyl_Trfase_fam3_N_dom"/>
</dbReference>
<dbReference type="InterPro" id="IPR036320">
    <property type="entry name" value="Glycosyl_Trfase_fam3_N_dom_sf"/>
</dbReference>
<dbReference type="InterPro" id="IPR035902">
    <property type="entry name" value="Nuc_phospho_transferase"/>
</dbReference>
<dbReference type="NCBIfam" id="TIGR01245">
    <property type="entry name" value="trpD"/>
    <property type="match status" value="1"/>
</dbReference>
<dbReference type="PANTHER" id="PTHR43285">
    <property type="entry name" value="ANTHRANILATE PHOSPHORIBOSYLTRANSFERASE"/>
    <property type="match status" value="1"/>
</dbReference>
<dbReference type="PANTHER" id="PTHR43285:SF2">
    <property type="entry name" value="ANTHRANILATE PHOSPHORIBOSYLTRANSFERASE"/>
    <property type="match status" value="1"/>
</dbReference>
<dbReference type="Pfam" id="PF02885">
    <property type="entry name" value="Glycos_trans_3N"/>
    <property type="match status" value="1"/>
</dbReference>
<dbReference type="Pfam" id="PF00591">
    <property type="entry name" value="Glycos_transf_3"/>
    <property type="match status" value="1"/>
</dbReference>
<dbReference type="SUPFAM" id="SSF52418">
    <property type="entry name" value="Nucleoside phosphorylase/phosphoribosyltransferase catalytic domain"/>
    <property type="match status" value="1"/>
</dbReference>
<dbReference type="SUPFAM" id="SSF47648">
    <property type="entry name" value="Nucleoside phosphorylase/phosphoribosyltransferase N-terminal domain"/>
    <property type="match status" value="1"/>
</dbReference>